<comment type="function">
    <text evidence="1">Component of the A-type ATP synthase that produces ATP from ADP in the presence of a proton gradient across the membrane. The B chain is a regulatory subunit.</text>
</comment>
<comment type="subunit">
    <text evidence="1">Has multiple subunits with at least A(3), B(3), C, D, E, F, H, I and proteolipid K(x).</text>
</comment>
<comment type="subcellular location">
    <subcellularLocation>
        <location evidence="1">Cell membrane</location>
        <topology evidence="1">Peripheral membrane protein</topology>
    </subcellularLocation>
</comment>
<comment type="similarity">
    <text evidence="1">Belongs to the ATPase alpha/beta chains family.</text>
</comment>
<keyword id="KW-0066">ATP synthesis</keyword>
<keyword id="KW-1003">Cell membrane</keyword>
<keyword id="KW-0375">Hydrogen ion transport</keyword>
<keyword id="KW-0406">Ion transport</keyword>
<keyword id="KW-0472">Membrane</keyword>
<keyword id="KW-1185">Reference proteome</keyword>
<keyword id="KW-0813">Transport</keyword>
<name>AATB_THEKO</name>
<proteinExistence type="inferred from homology"/>
<reference key="1">
    <citation type="journal article" date="2005" name="Genome Res.">
        <title>Complete genome sequence of the hyperthermophilic archaeon Thermococcus kodakaraensis KOD1 and comparison with Pyrococcus genomes.</title>
        <authorList>
            <person name="Fukui T."/>
            <person name="Atomi H."/>
            <person name="Kanai T."/>
            <person name="Matsumi R."/>
            <person name="Fujiwara S."/>
            <person name="Imanaka T."/>
        </authorList>
    </citation>
    <scope>NUCLEOTIDE SEQUENCE [LARGE SCALE GENOMIC DNA]</scope>
    <source>
        <strain>ATCC BAA-918 / JCM 12380 / KOD1</strain>
    </source>
</reference>
<organism>
    <name type="scientific">Thermococcus kodakarensis (strain ATCC BAA-918 / JCM 12380 / KOD1)</name>
    <name type="common">Pyrococcus kodakaraensis (strain KOD1)</name>
    <dbReference type="NCBI Taxonomy" id="69014"/>
    <lineage>
        <taxon>Archaea</taxon>
        <taxon>Methanobacteriati</taxon>
        <taxon>Methanobacteriota</taxon>
        <taxon>Thermococci</taxon>
        <taxon>Thermococcales</taxon>
        <taxon>Thermococcaceae</taxon>
        <taxon>Thermococcus</taxon>
    </lineage>
</organism>
<feature type="chain" id="PRO_0000144665" description="A-type ATP synthase subunit B">
    <location>
        <begin position="1"/>
        <end position="465"/>
    </location>
</feature>
<sequence length="465" mass="52413">MIMPGMEYSTVSKIYGPLMIVQGVKGVAYGEVVEIETESGEKRKGQVLEAREDMAIVQVFEGTRDLDIKTTRVRFTGETLKVPVSMDMLGRIFNGIGKPIDGGPEIIPEDRRDVHGAPLNPVARAYPRDFIQTGISAIDGMNTLVRGQKLPIFSGSGLPHNMLAAQIARQAKVLGEEEQFAVVFAAMGITYEEANFFKKSFEETGAIERAVLFLNLADDPAIERIITPRMALTVAEYLAFDYDMQVLVILTDMTNYAEALREISAAREEVPGRRGYPGYMYTDLATIYERAGRVRGKKGSITQMPILTMPDDDITHPIPDLTGYITEGQIVLSRELHRKGIYPPIDVLPSLSRLMKDGIGKGRTREDHPQLSQQLYAAYAEGRSLRDLVAVVGEEALSETDRKYLKFADRFEREFVAQRYDEDRSIFETLDLGWELLAELPESELKRVRKEYILKYHPKYRKRGE</sequence>
<evidence type="ECO:0000255" key="1">
    <source>
        <dbReference type="HAMAP-Rule" id="MF_00310"/>
    </source>
</evidence>
<gene>
    <name evidence="1" type="primary">atpB</name>
    <name type="ordered locus">TK1603</name>
</gene>
<protein>
    <recommendedName>
        <fullName evidence="1">A-type ATP synthase subunit B</fullName>
    </recommendedName>
</protein>
<dbReference type="EMBL" id="AP006878">
    <property type="protein sequence ID" value="BAD85792.1"/>
    <property type="molecule type" value="Genomic_DNA"/>
</dbReference>
<dbReference type="SMR" id="Q5JIR2"/>
<dbReference type="FunCoup" id="Q5JIR2">
    <property type="interactions" value="44"/>
</dbReference>
<dbReference type="STRING" id="69014.TK1603"/>
<dbReference type="EnsemblBacteria" id="BAD85792">
    <property type="protein sequence ID" value="BAD85792"/>
    <property type="gene ID" value="TK1603"/>
</dbReference>
<dbReference type="KEGG" id="tko:TK1603"/>
<dbReference type="PATRIC" id="fig|69014.16.peg.1562"/>
<dbReference type="eggNOG" id="arCOG00865">
    <property type="taxonomic scope" value="Archaea"/>
</dbReference>
<dbReference type="HOGENOM" id="CLU_022916_0_0_2"/>
<dbReference type="InParanoid" id="Q5JIR2"/>
<dbReference type="PhylomeDB" id="Q5JIR2"/>
<dbReference type="Proteomes" id="UP000000536">
    <property type="component" value="Chromosome"/>
</dbReference>
<dbReference type="GO" id="GO:0005886">
    <property type="term" value="C:plasma membrane"/>
    <property type="evidence" value="ECO:0007669"/>
    <property type="project" value="UniProtKB-SubCell"/>
</dbReference>
<dbReference type="GO" id="GO:0033178">
    <property type="term" value="C:proton-transporting two-sector ATPase complex, catalytic domain"/>
    <property type="evidence" value="ECO:0007669"/>
    <property type="project" value="InterPro"/>
</dbReference>
<dbReference type="GO" id="GO:0005524">
    <property type="term" value="F:ATP binding"/>
    <property type="evidence" value="ECO:0007669"/>
    <property type="project" value="UniProtKB-UniRule"/>
</dbReference>
<dbReference type="GO" id="GO:0046933">
    <property type="term" value="F:proton-transporting ATP synthase activity, rotational mechanism"/>
    <property type="evidence" value="ECO:0007669"/>
    <property type="project" value="UniProtKB-UniRule"/>
</dbReference>
<dbReference type="GO" id="GO:0042777">
    <property type="term" value="P:proton motive force-driven plasma membrane ATP synthesis"/>
    <property type="evidence" value="ECO:0007669"/>
    <property type="project" value="UniProtKB-UniRule"/>
</dbReference>
<dbReference type="CDD" id="cd18112">
    <property type="entry name" value="ATP-synt_V_A-type_beta_C"/>
    <property type="match status" value="1"/>
</dbReference>
<dbReference type="CDD" id="cd18118">
    <property type="entry name" value="ATP-synt_V_A-type_beta_N"/>
    <property type="match status" value="1"/>
</dbReference>
<dbReference type="CDD" id="cd01135">
    <property type="entry name" value="V_A-ATPase_B"/>
    <property type="match status" value="1"/>
</dbReference>
<dbReference type="Gene3D" id="3.40.50.12240">
    <property type="match status" value="1"/>
</dbReference>
<dbReference type="HAMAP" id="MF_00310">
    <property type="entry name" value="ATP_synth_B_arch"/>
    <property type="match status" value="1"/>
</dbReference>
<dbReference type="InterPro" id="IPR055190">
    <property type="entry name" value="ATP-synt_VA_C"/>
</dbReference>
<dbReference type="InterPro" id="IPR020003">
    <property type="entry name" value="ATPase_a/bsu_AS"/>
</dbReference>
<dbReference type="InterPro" id="IPR005724">
    <property type="entry name" value="ATPase_A1-cplx_bsu"/>
</dbReference>
<dbReference type="InterPro" id="IPR004100">
    <property type="entry name" value="ATPase_F1/V1/A1_a/bsu_N"/>
</dbReference>
<dbReference type="InterPro" id="IPR036121">
    <property type="entry name" value="ATPase_F1/V1/A1_a/bsu_N_sf"/>
</dbReference>
<dbReference type="InterPro" id="IPR000194">
    <property type="entry name" value="ATPase_F1/V1/A1_a/bsu_nucl-bd"/>
</dbReference>
<dbReference type="InterPro" id="IPR027417">
    <property type="entry name" value="P-loop_NTPase"/>
</dbReference>
<dbReference type="InterPro" id="IPR022879">
    <property type="entry name" value="V-ATPase_su_B/beta"/>
</dbReference>
<dbReference type="NCBIfam" id="TIGR01041">
    <property type="entry name" value="ATP_syn_B_arch"/>
    <property type="match status" value="1"/>
</dbReference>
<dbReference type="NCBIfam" id="NF003235">
    <property type="entry name" value="PRK04196.1"/>
    <property type="match status" value="1"/>
</dbReference>
<dbReference type="PANTHER" id="PTHR43389">
    <property type="entry name" value="V-TYPE PROTON ATPASE SUBUNIT B"/>
    <property type="match status" value="1"/>
</dbReference>
<dbReference type="PANTHER" id="PTHR43389:SF4">
    <property type="entry name" value="V-TYPE PROTON ATPASE SUBUNIT B"/>
    <property type="match status" value="1"/>
</dbReference>
<dbReference type="Pfam" id="PF00006">
    <property type="entry name" value="ATP-synt_ab"/>
    <property type="match status" value="1"/>
</dbReference>
<dbReference type="Pfam" id="PF02874">
    <property type="entry name" value="ATP-synt_ab_N"/>
    <property type="match status" value="1"/>
</dbReference>
<dbReference type="Pfam" id="PF22919">
    <property type="entry name" value="ATP-synt_VA_C"/>
    <property type="match status" value="1"/>
</dbReference>
<dbReference type="PIRSF" id="PIRSF039114">
    <property type="entry name" value="V-ATPsynth_beta/V-ATPase_B"/>
    <property type="match status" value="1"/>
</dbReference>
<dbReference type="SUPFAM" id="SSF47917">
    <property type="entry name" value="C-terminal domain of alpha and beta subunits of F1 ATP synthase"/>
    <property type="match status" value="1"/>
</dbReference>
<dbReference type="SUPFAM" id="SSF50615">
    <property type="entry name" value="N-terminal domain of alpha and beta subunits of F1 ATP synthase"/>
    <property type="match status" value="1"/>
</dbReference>
<dbReference type="SUPFAM" id="SSF52540">
    <property type="entry name" value="P-loop containing nucleoside triphosphate hydrolases"/>
    <property type="match status" value="1"/>
</dbReference>
<dbReference type="PROSITE" id="PS00152">
    <property type="entry name" value="ATPASE_ALPHA_BETA"/>
    <property type="match status" value="1"/>
</dbReference>
<accession>Q5JIR2</accession>